<gene>
    <name evidence="1" type="primary">aroC</name>
    <name type="ordered locus">OCAR_6901</name>
    <name type="ordered locus">OCA5_c11820</name>
</gene>
<accession>B6JFJ0</accession>
<accession>F8BUV1</accession>
<organism>
    <name type="scientific">Afipia carboxidovorans (strain ATCC 49405 / DSM 1227 / KCTC 32145 / OM5)</name>
    <name type="common">Oligotropha carboxidovorans</name>
    <dbReference type="NCBI Taxonomy" id="504832"/>
    <lineage>
        <taxon>Bacteria</taxon>
        <taxon>Pseudomonadati</taxon>
        <taxon>Pseudomonadota</taxon>
        <taxon>Alphaproteobacteria</taxon>
        <taxon>Hyphomicrobiales</taxon>
        <taxon>Nitrobacteraceae</taxon>
        <taxon>Afipia</taxon>
    </lineage>
</organism>
<reference key="1">
    <citation type="journal article" date="2008" name="J. Bacteriol.">
        <title>Genome sequence of the chemolithoautotrophic bacterium Oligotropha carboxidovorans OM5T.</title>
        <authorList>
            <person name="Paul D."/>
            <person name="Bridges S."/>
            <person name="Burgess S.C."/>
            <person name="Dandass Y."/>
            <person name="Lawrence M.L."/>
        </authorList>
    </citation>
    <scope>NUCLEOTIDE SEQUENCE [LARGE SCALE GENOMIC DNA]</scope>
    <source>
        <strain>ATCC 49405 / DSM 1227 / KCTC 32145 / OM5</strain>
    </source>
</reference>
<reference key="2">
    <citation type="journal article" date="2011" name="J. Bacteriol.">
        <title>Complete genome sequences of the chemolithoautotrophic Oligotropha carboxidovorans strains OM4 and OM5.</title>
        <authorList>
            <person name="Volland S."/>
            <person name="Rachinger M."/>
            <person name="Strittmatter A."/>
            <person name="Daniel R."/>
            <person name="Gottschalk G."/>
            <person name="Meyer O."/>
        </authorList>
    </citation>
    <scope>NUCLEOTIDE SEQUENCE [LARGE SCALE GENOMIC DNA]</scope>
    <source>
        <strain>ATCC 49405 / DSM 1227 / KCTC 32145 / OM5</strain>
    </source>
</reference>
<keyword id="KW-0028">Amino-acid biosynthesis</keyword>
<keyword id="KW-0057">Aromatic amino acid biosynthesis</keyword>
<keyword id="KW-0274">FAD</keyword>
<keyword id="KW-0285">Flavoprotein</keyword>
<keyword id="KW-0288">FMN</keyword>
<keyword id="KW-0456">Lyase</keyword>
<keyword id="KW-0521">NADP</keyword>
<keyword id="KW-1185">Reference proteome</keyword>
<feature type="chain" id="PRO_1000115377" description="Chorismate synthase">
    <location>
        <begin position="1"/>
        <end position="359"/>
    </location>
</feature>
<feature type="binding site" evidence="1">
    <location>
        <position position="48"/>
    </location>
    <ligand>
        <name>NADP(+)</name>
        <dbReference type="ChEBI" id="CHEBI:58349"/>
    </ligand>
</feature>
<feature type="binding site" evidence="1">
    <location>
        <position position="54"/>
    </location>
    <ligand>
        <name>NADP(+)</name>
        <dbReference type="ChEBI" id="CHEBI:58349"/>
    </ligand>
</feature>
<feature type="binding site" evidence="1">
    <location>
        <begin position="129"/>
        <end position="131"/>
    </location>
    <ligand>
        <name>FMN</name>
        <dbReference type="ChEBI" id="CHEBI:58210"/>
    </ligand>
</feature>
<feature type="binding site" evidence="1">
    <location>
        <begin position="241"/>
        <end position="242"/>
    </location>
    <ligand>
        <name>FMN</name>
        <dbReference type="ChEBI" id="CHEBI:58210"/>
    </ligand>
</feature>
<feature type="binding site" evidence="1">
    <location>
        <position position="285"/>
    </location>
    <ligand>
        <name>FMN</name>
        <dbReference type="ChEBI" id="CHEBI:58210"/>
    </ligand>
</feature>
<feature type="binding site" evidence="1">
    <location>
        <begin position="300"/>
        <end position="304"/>
    </location>
    <ligand>
        <name>FMN</name>
        <dbReference type="ChEBI" id="CHEBI:58210"/>
    </ligand>
</feature>
<feature type="binding site" evidence="1">
    <location>
        <position position="326"/>
    </location>
    <ligand>
        <name>FMN</name>
        <dbReference type="ChEBI" id="CHEBI:58210"/>
    </ligand>
</feature>
<comment type="function">
    <text evidence="1">Catalyzes the anti-1,4-elimination of the C-3 phosphate and the C-6 proR hydrogen from 5-enolpyruvylshikimate-3-phosphate (EPSP) to yield chorismate, which is the branch point compound that serves as the starting substrate for the three terminal pathways of aromatic amino acid biosynthesis. This reaction introduces a second double bond into the aromatic ring system.</text>
</comment>
<comment type="catalytic activity">
    <reaction evidence="1">
        <text>5-O-(1-carboxyvinyl)-3-phosphoshikimate = chorismate + phosphate</text>
        <dbReference type="Rhea" id="RHEA:21020"/>
        <dbReference type="ChEBI" id="CHEBI:29748"/>
        <dbReference type="ChEBI" id="CHEBI:43474"/>
        <dbReference type="ChEBI" id="CHEBI:57701"/>
        <dbReference type="EC" id="4.2.3.5"/>
    </reaction>
</comment>
<comment type="cofactor">
    <cofactor evidence="1">
        <name>FMNH2</name>
        <dbReference type="ChEBI" id="CHEBI:57618"/>
    </cofactor>
    <text evidence="1">Reduced FMN (FMNH(2)).</text>
</comment>
<comment type="pathway">
    <text evidence="1">Metabolic intermediate biosynthesis; chorismate biosynthesis; chorismate from D-erythrose 4-phosphate and phosphoenolpyruvate: step 7/7.</text>
</comment>
<comment type="subunit">
    <text evidence="1">Homotetramer.</text>
</comment>
<comment type="similarity">
    <text evidence="1">Belongs to the chorismate synthase family.</text>
</comment>
<dbReference type="EC" id="4.2.3.5" evidence="1"/>
<dbReference type="EMBL" id="CP001196">
    <property type="protein sequence ID" value="ACI94010.1"/>
    <property type="molecule type" value="Genomic_DNA"/>
</dbReference>
<dbReference type="EMBL" id="CP002826">
    <property type="protein sequence ID" value="AEI05900.1"/>
    <property type="molecule type" value="Genomic_DNA"/>
</dbReference>
<dbReference type="RefSeq" id="WP_012564036.1">
    <property type="nucleotide sequence ID" value="NC_015684.1"/>
</dbReference>
<dbReference type="SMR" id="B6JFJ0"/>
<dbReference type="STRING" id="504832.OCA5_c11820"/>
<dbReference type="KEGG" id="oca:OCAR_6901"/>
<dbReference type="KEGG" id="ocg:OCA5_c11820"/>
<dbReference type="PATRIC" id="fig|504832.7.peg.1256"/>
<dbReference type="eggNOG" id="COG0082">
    <property type="taxonomic scope" value="Bacteria"/>
</dbReference>
<dbReference type="HOGENOM" id="CLU_034547_0_0_5"/>
<dbReference type="OrthoDB" id="9771806at2"/>
<dbReference type="UniPathway" id="UPA00053">
    <property type="reaction ID" value="UER00090"/>
</dbReference>
<dbReference type="Proteomes" id="UP000007730">
    <property type="component" value="Chromosome"/>
</dbReference>
<dbReference type="GO" id="GO:0005829">
    <property type="term" value="C:cytosol"/>
    <property type="evidence" value="ECO:0007669"/>
    <property type="project" value="TreeGrafter"/>
</dbReference>
<dbReference type="GO" id="GO:0004107">
    <property type="term" value="F:chorismate synthase activity"/>
    <property type="evidence" value="ECO:0007669"/>
    <property type="project" value="UniProtKB-UniRule"/>
</dbReference>
<dbReference type="GO" id="GO:0010181">
    <property type="term" value="F:FMN binding"/>
    <property type="evidence" value="ECO:0007669"/>
    <property type="project" value="TreeGrafter"/>
</dbReference>
<dbReference type="GO" id="GO:0008652">
    <property type="term" value="P:amino acid biosynthetic process"/>
    <property type="evidence" value="ECO:0007669"/>
    <property type="project" value="UniProtKB-KW"/>
</dbReference>
<dbReference type="GO" id="GO:0009073">
    <property type="term" value="P:aromatic amino acid family biosynthetic process"/>
    <property type="evidence" value="ECO:0007669"/>
    <property type="project" value="UniProtKB-KW"/>
</dbReference>
<dbReference type="GO" id="GO:0009423">
    <property type="term" value="P:chorismate biosynthetic process"/>
    <property type="evidence" value="ECO:0007669"/>
    <property type="project" value="UniProtKB-UniRule"/>
</dbReference>
<dbReference type="CDD" id="cd07304">
    <property type="entry name" value="Chorismate_synthase"/>
    <property type="match status" value="1"/>
</dbReference>
<dbReference type="Gene3D" id="3.60.150.10">
    <property type="entry name" value="Chorismate synthase AroC"/>
    <property type="match status" value="1"/>
</dbReference>
<dbReference type="HAMAP" id="MF_00300">
    <property type="entry name" value="Chorismate_synth"/>
    <property type="match status" value="1"/>
</dbReference>
<dbReference type="InterPro" id="IPR000453">
    <property type="entry name" value="Chorismate_synth"/>
</dbReference>
<dbReference type="InterPro" id="IPR035904">
    <property type="entry name" value="Chorismate_synth_AroC_sf"/>
</dbReference>
<dbReference type="InterPro" id="IPR020541">
    <property type="entry name" value="Chorismate_synthase_CS"/>
</dbReference>
<dbReference type="NCBIfam" id="TIGR00033">
    <property type="entry name" value="aroC"/>
    <property type="match status" value="1"/>
</dbReference>
<dbReference type="NCBIfam" id="NF003793">
    <property type="entry name" value="PRK05382.1"/>
    <property type="match status" value="1"/>
</dbReference>
<dbReference type="PANTHER" id="PTHR21085">
    <property type="entry name" value="CHORISMATE SYNTHASE"/>
    <property type="match status" value="1"/>
</dbReference>
<dbReference type="PANTHER" id="PTHR21085:SF0">
    <property type="entry name" value="CHORISMATE SYNTHASE"/>
    <property type="match status" value="1"/>
</dbReference>
<dbReference type="Pfam" id="PF01264">
    <property type="entry name" value="Chorismate_synt"/>
    <property type="match status" value="1"/>
</dbReference>
<dbReference type="PIRSF" id="PIRSF001456">
    <property type="entry name" value="Chorismate_synth"/>
    <property type="match status" value="1"/>
</dbReference>
<dbReference type="SUPFAM" id="SSF103263">
    <property type="entry name" value="Chorismate synthase, AroC"/>
    <property type="match status" value="1"/>
</dbReference>
<dbReference type="PROSITE" id="PS00787">
    <property type="entry name" value="CHORISMATE_SYNTHASE_1"/>
    <property type="match status" value="1"/>
</dbReference>
<dbReference type="PROSITE" id="PS00788">
    <property type="entry name" value="CHORISMATE_SYNTHASE_2"/>
    <property type="match status" value="1"/>
</dbReference>
<dbReference type="PROSITE" id="PS00789">
    <property type="entry name" value="CHORISMATE_SYNTHASE_3"/>
    <property type="match status" value="1"/>
</dbReference>
<evidence type="ECO:0000255" key="1">
    <source>
        <dbReference type="HAMAP-Rule" id="MF_00300"/>
    </source>
</evidence>
<proteinExistence type="inferred from homology"/>
<protein>
    <recommendedName>
        <fullName evidence="1">Chorismate synthase</fullName>
        <shortName evidence="1">CS</shortName>
        <ecNumber evidence="1">4.2.3.5</ecNumber>
    </recommendedName>
    <alternativeName>
        <fullName evidence="1">5-enolpyruvylshikimate-3-phosphate phospholyase</fullName>
    </alternativeName>
</protein>
<name>AROC_AFIC5</name>
<sequence>MSFNTFGHMFRVTTFGESHGVALGCVVDGCPPRIPLTAAEIQRDLDRRKPGQSRFTTQRQEADQVKILSGVMETERGQVTTGTPIALMIENTDQRSKDYSDIKDKYRPGHADYTYEAKYGIRDYRGGGRSSARETAARVAAGAVARKVIPDVKVRAALVQMGPHKIDRANWNWDDVTRNPFFCPDATKAAFFEEYLDEIRKSGSSIGAVIEVVAENVPAGWGAPIYGKLDSDLAAALMSINAVKGVEIGAGFGAAELRGEDNADEMRAGNNGPVFLSNHAGGILGGISTGQAVVARFAVKPTSSILTPRKTVDRAGGETDILTKGRHDPCVGIRAVPVAEAMVACVLADHFLRHRGQNG</sequence>